<dbReference type="EC" id="3.4.21.-"/>
<dbReference type="EMBL" id="BX571856">
    <property type="protein sequence ID" value="CAG40429.1"/>
    <property type="molecule type" value="Genomic_DNA"/>
</dbReference>
<dbReference type="RefSeq" id="WP_000342154.1">
    <property type="nucleotide sequence ID" value="NC_002952.2"/>
</dbReference>
<dbReference type="SMR" id="Q6GGY8"/>
<dbReference type="KEGG" id="sar:SAR1432"/>
<dbReference type="HOGENOM" id="CLU_017295_3_0_9"/>
<dbReference type="Proteomes" id="UP000000596">
    <property type="component" value="Chromosome"/>
</dbReference>
<dbReference type="GO" id="GO:0030288">
    <property type="term" value="C:outer membrane-bounded periplasmic space"/>
    <property type="evidence" value="ECO:0007669"/>
    <property type="project" value="TreeGrafter"/>
</dbReference>
<dbReference type="GO" id="GO:0005886">
    <property type="term" value="C:plasma membrane"/>
    <property type="evidence" value="ECO:0007669"/>
    <property type="project" value="UniProtKB-SubCell"/>
</dbReference>
<dbReference type="GO" id="GO:0004175">
    <property type="term" value="F:endopeptidase activity"/>
    <property type="evidence" value="ECO:0007669"/>
    <property type="project" value="TreeGrafter"/>
</dbReference>
<dbReference type="GO" id="GO:0008236">
    <property type="term" value="F:serine-type peptidase activity"/>
    <property type="evidence" value="ECO:0007669"/>
    <property type="project" value="UniProtKB-KW"/>
</dbReference>
<dbReference type="GO" id="GO:0006508">
    <property type="term" value="P:proteolysis"/>
    <property type="evidence" value="ECO:0007669"/>
    <property type="project" value="UniProtKB-KW"/>
</dbReference>
<dbReference type="GO" id="GO:0007165">
    <property type="term" value="P:signal transduction"/>
    <property type="evidence" value="ECO:0007669"/>
    <property type="project" value="TreeGrafter"/>
</dbReference>
<dbReference type="CDD" id="cd06782">
    <property type="entry name" value="cpPDZ_CPP-like"/>
    <property type="match status" value="1"/>
</dbReference>
<dbReference type="CDD" id="cd07560">
    <property type="entry name" value="Peptidase_S41_CPP"/>
    <property type="match status" value="1"/>
</dbReference>
<dbReference type="FunFam" id="2.30.42.10:FF:000063">
    <property type="entry name" value="Peptidase, S41 family"/>
    <property type="match status" value="1"/>
</dbReference>
<dbReference type="FunFam" id="3.30.750.44:FF:000001">
    <property type="entry name" value="S41 family peptidase"/>
    <property type="match status" value="1"/>
</dbReference>
<dbReference type="Gene3D" id="2.30.42.10">
    <property type="match status" value="1"/>
</dbReference>
<dbReference type="Gene3D" id="3.30.750.44">
    <property type="match status" value="1"/>
</dbReference>
<dbReference type="Gene3D" id="3.90.226.10">
    <property type="entry name" value="2-enoyl-CoA Hydratase, Chain A, domain 1"/>
    <property type="match status" value="1"/>
</dbReference>
<dbReference type="Gene3D" id="1.10.101.10">
    <property type="entry name" value="PGBD-like superfamily/PGBD"/>
    <property type="match status" value="1"/>
</dbReference>
<dbReference type="InterPro" id="IPR029045">
    <property type="entry name" value="ClpP/crotonase-like_dom_sf"/>
</dbReference>
<dbReference type="InterPro" id="IPR055210">
    <property type="entry name" value="CtpA/B_N"/>
</dbReference>
<dbReference type="InterPro" id="IPR001478">
    <property type="entry name" value="PDZ"/>
</dbReference>
<dbReference type="InterPro" id="IPR041489">
    <property type="entry name" value="PDZ_6"/>
</dbReference>
<dbReference type="InterPro" id="IPR036034">
    <property type="entry name" value="PDZ_sf"/>
</dbReference>
<dbReference type="InterPro" id="IPR004447">
    <property type="entry name" value="Peptidase_S41A"/>
</dbReference>
<dbReference type="InterPro" id="IPR002477">
    <property type="entry name" value="Peptidoglycan-bd-like"/>
</dbReference>
<dbReference type="InterPro" id="IPR036365">
    <property type="entry name" value="PGBD-like_sf"/>
</dbReference>
<dbReference type="InterPro" id="IPR036366">
    <property type="entry name" value="PGBDSf"/>
</dbReference>
<dbReference type="InterPro" id="IPR005151">
    <property type="entry name" value="Tail-specific_protease"/>
</dbReference>
<dbReference type="NCBIfam" id="TIGR00225">
    <property type="entry name" value="prc"/>
    <property type="match status" value="1"/>
</dbReference>
<dbReference type="PANTHER" id="PTHR32060:SF30">
    <property type="entry name" value="CARBOXY-TERMINAL PROCESSING PROTEASE CTPA"/>
    <property type="match status" value="1"/>
</dbReference>
<dbReference type="PANTHER" id="PTHR32060">
    <property type="entry name" value="TAIL-SPECIFIC PROTEASE"/>
    <property type="match status" value="1"/>
</dbReference>
<dbReference type="Pfam" id="PF22694">
    <property type="entry name" value="CtpB_N-like"/>
    <property type="match status" value="1"/>
</dbReference>
<dbReference type="Pfam" id="PF17820">
    <property type="entry name" value="PDZ_6"/>
    <property type="match status" value="1"/>
</dbReference>
<dbReference type="Pfam" id="PF03572">
    <property type="entry name" value="Peptidase_S41"/>
    <property type="match status" value="1"/>
</dbReference>
<dbReference type="Pfam" id="PF01471">
    <property type="entry name" value="PG_binding_1"/>
    <property type="match status" value="1"/>
</dbReference>
<dbReference type="SMART" id="SM00228">
    <property type="entry name" value="PDZ"/>
    <property type="match status" value="1"/>
</dbReference>
<dbReference type="SMART" id="SM00245">
    <property type="entry name" value="TSPc"/>
    <property type="match status" value="1"/>
</dbReference>
<dbReference type="SUPFAM" id="SSF52096">
    <property type="entry name" value="ClpP/crotonase"/>
    <property type="match status" value="1"/>
</dbReference>
<dbReference type="SUPFAM" id="SSF50156">
    <property type="entry name" value="PDZ domain-like"/>
    <property type="match status" value="1"/>
</dbReference>
<dbReference type="SUPFAM" id="SSF47090">
    <property type="entry name" value="PGBD-like"/>
    <property type="match status" value="1"/>
</dbReference>
<dbReference type="PROSITE" id="PS50106">
    <property type="entry name" value="PDZ"/>
    <property type="match status" value="1"/>
</dbReference>
<evidence type="ECO:0000250" key="1"/>
<evidence type="ECO:0000255" key="2"/>
<evidence type="ECO:0000255" key="3">
    <source>
        <dbReference type="PROSITE-ProRule" id="PRU00143"/>
    </source>
</evidence>
<evidence type="ECO:0000256" key="4">
    <source>
        <dbReference type="SAM" id="MobiDB-lite"/>
    </source>
</evidence>
<evidence type="ECO:0000305" key="5"/>
<protein>
    <recommendedName>
        <fullName>Probable CtpA-like serine protease</fullName>
        <ecNumber>3.4.21.-</ecNumber>
    </recommendedName>
</protein>
<organism>
    <name type="scientific">Staphylococcus aureus (strain MRSA252)</name>
    <dbReference type="NCBI Taxonomy" id="282458"/>
    <lineage>
        <taxon>Bacteria</taxon>
        <taxon>Bacillati</taxon>
        <taxon>Bacillota</taxon>
        <taxon>Bacilli</taxon>
        <taxon>Bacillales</taxon>
        <taxon>Staphylococcaceae</taxon>
        <taxon>Staphylococcus</taxon>
    </lineage>
</organism>
<comment type="subcellular location">
    <subcellularLocation>
        <location evidence="5">Cell membrane</location>
        <topology evidence="5">Single-pass membrane protein</topology>
    </subcellularLocation>
</comment>
<comment type="similarity">
    <text evidence="5">Belongs to the peptidase S41A family.</text>
</comment>
<proteinExistence type="inferred from homology"/>
<sequence length="496" mass="55259">MDDKQHTTSSDDERAENATSNQDQQTNSSKRVHLKRWQFISILIGTIIITAVITVVAYIFINQKISGLNKTDQANLNKIENVYKILNSDYYKKQNSDKLSKAAIDGMVKELKDPYSEYLTKEQTKSFNEGVSGDFVGIGAEMQKKNDQIMVTSPMKGSPAERAGIRPKDVITKVNGKSIKGKALDEVVKDVRGKENTEVTLTVQRGSEEKDVKIKREKIHVKSVEYKKKGKVGVITINKFQNDTSGELKDAVLKAHKDGLKKIVLDLRNNPGGLLDEAVKMANIFIDKGKTVVKLEKGKDTEAIQTSNDALKEAKDMDISILVNEGSASASEVFTGALKDYNKAKVYGSKTFGKGVVQTTREFKDGSLLKYTEMKWLTPDGHYIHGKGIKPDVTIDTPKYQSLNVIPNTKTFKVGDDDKNIKTIKIGLSALGYKVDNESTQFDQALENLVKAFQQANKLEVTGEFNKETNNKFTELLVEKANKHDDVLDKLINILK</sequence>
<gene>
    <name type="ordered locus">SAR1432</name>
</gene>
<name>CTPAL_STAAR</name>
<feature type="chain" id="PRO_0000233192" description="Probable CtpA-like serine protease">
    <location>
        <begin position="1"/>
        <end position="496"/>
    </location>
</feature>
<feature type="transmembrane region" description="Helical" evidence="2">
    <location>
        <begin position="39"/>
        <end position="59"/>
    </location>
</feature>
<feature type="domain" description="PDZ" evidence="3">
    <location>
        <begin position="124"/>
        <end position="206"/>
    </location>
</feature>
<feature type="region of interest" description="Disordered" evidence="4">
    <location>
        <begin position="1"/>
        <end position="27"/>
    </location>
</feature>
<feature type="compositionally biased region" description="Basic and acidic residues" evidence="4">
    <location>
        <begin position="1"/>
        <end position="16"/>
    </location>
</feature>
<feature type="compositionally biased region" description="Polar residues" evidence="4">
    <location>
        <begin position="17"/>
        <end position="27"/>
    </location>
</feature>
<feature type="active site" description="Charge relay system" evidence="1">
    <location>
        <position position="329"/>
    </location>
</feature>
<feature type="active site" description="Charge relay system" evidence="1">
    <location>
        <position position="340"/>
    </location>
</feature>
<feature type="active site" description="Charge relay system" evidence="1">
    <location>
        <position position="354"/>
    </location>
</feature>
<accession>Q6GGY8</accession>
<keyword id="KW-1003">Cell membrane</keyword>
<keyword id="KW-0378">Hydrolase</keyword>
<keyword id="KW-0472">Membrane</keyword>
<keyword id="KW-0645">Protease</keyword>
<keyword id="KW-0720">Serine protease</keyword>
<keyword id="KW-0812">Transmembrane</keyword>
<keyword id="KW-1133">Transmembrane helix</keyword>
<reference key="1">
    <citation type="journal article" date="2004" name="Proc. Natl. Acad. Sci. U.S.A.">
        <title>Complete genomes of two clinical Staphylococcus aureus strains: evidence for the rapid evolution of virulence and drug resistance.</title>
        <authorList>
            <person name="Holden M.T.G."/>
            <person name="Feil E.J."/>
            <person name="Lindsay J.A."/>
            <person name="Peacock S.J."/>
            <person name="Day N.P.J."/>
            <person name="Enright M.C."/>
            <person name="Foster T.J."/>
            <person name="Moore C.E."/>
            <person name="Hurst L."/>
            <person name="Atkin R."/>
            <person name="Barron A."/>
            <person name="Bason N."/>
            <person name="Bentley S.D."/>
            <person name="Chillingworth C."/>
            <person name="Chillingworth T."/>
            <person name="Churcher C."/>
            <person name="Clark L."/>
            <person name="Corton C."/>
            <person name="Cronin A."/>
            <person name="Doggett J."/>
            <person name="Dowd L."/>
            <person name="Feltwell T."/>
            <person name="Hance Z."/>
            <person name="Harris B."/>
            <person name="Hauser H."/>
            <person name="Holroyd S."/>
            <person name="Jagels K."/>
            <person name="James K.D."/>
            <person name="Lennard N."/>
            <person name="Line A."/>
            <person name="Mayes R."/>
            <person name="Moule S."/>
            <person name="Mungall K."/>
            <person name="Ormond D."/>
            <person name="Quail M.A."/>
            <person name="Rabbinowitsch E."/>
            <person name="Rutherford K.M."/>
            <person name="Sanders M."/>
            <person name="Sharp S."/>
            <person name="Simmonds M."/>
            <person name="Stevens K."/>
            <person name="Whitehead S."/>
            <person name="Barrell B.G."/>
            <person name="Spratt B.G."/>
            <person name="Parkhill J."/>
        </authorList>
    </citation>
    <scope>NUCLEOTIDE SEQUENCE [LARGE SCALE GENOMIC DNA]</scope>
    <source>
        <strain>MRSA252</strain>
    </source>
</reference>